<name>RL31_CLONN</name>
<reference key="1">
    <citation type="journal article" date="2006" name="Nat. Biotechnol.">
        <title>The genome and transcriptomes of the anti-tumor agent Clostridium novyi-NT.</title>
        <authorList>
            <person name="Bettegowda C."/>
            <person name="Huang X."/>
            <person name="Lin J."/>
            <person name="Cheong I."/>
            <person name="Kohli M."/>
            <person name="Szabo S.A."/>
            <person name="Zhang X."/>
            <person name="Diaz L.A. Jr."/>
            <person name="Velculescu V.E."/>
            <person name="Parmigiani G."/>
            <person name="Kinzler K.W."/>
            <person name="Vogelstein B."/>
            <person name="Zhou S."/>
        </authorList>
    </citation>
    <scope>NUCLEOTIDE SEQUENCE [LARGE SCALE GENOMIC DNA]</scope>
    <source>
        <strain>NT</strain>
    </source>
</reference>
<feature type="chain" id="PRO_1000126597" description="Large ribosomal subunit protein bL31">
    <location>
        <begin position="1"/>
        <end position="69"/>
    </location>
</feature>
<feature type="binding site" evidence="1">
    <location>
        <position position="17"/>
    </location>
    <ligand>
        <name>Zn(2+)</name>
        <dbReference type="ChEBI" id="CHEBI:29105"/>
    </ligand>
</feature>
<feature type="binding site" evidence="1">
    <location>
        <position position="19"/>
    </location>
    <ligand>
        <name>Zn(2+)</name>
        <dbReference type="ChEBI" id="CHEBI:29105"/>
    </ligand>
</feature>
<feature type="binding site" evidence="1">
    <location>
        <position position="37"/>
    </location>
    <ligand>
        <name>Zn(2+)</name>
        <dbReference type="ChEBI" id="CHEBI:29105"/>
    </ligand>
</feature>
<feature type="binding site" evidence="1">
    <location>
        <position position="40"/>
    </location>
    <ligand>
        <name>Zn(2+)</name>
        <dbReference type="ChEBI" id="CHEBI:29105"/>
    </ligand>
</feature>
<accession>A0Q316</accession>
<dbReference type="EMBL" id="CP000382">
    <property type="protein sequence ID" value="ABK62516.1"/>
    <property type="molecule type" value="Genomic_DNA"/>
</dbReference>
<dbReference type="RefSeq" id="WP_011722997.1">
    <property type="nucleotide sequence ID" value="NC_008593.1"/>
</dbReference>
<dbReference type="SMR" id="A0Q316"/>
<dbReference type="STRING" id="386415.NT01CX_0552"/>
<dbReference type="KEGG" id="cno:NT01CX_0552"/>
<dbReference type="eggNOG" id="COG0254">
    <property type="taxonomic scope" value="Bacteria"/>
</dbReference>
<dbReference type="HOGENOM" id="CLU_114306_4_3_9"/>
<dbReference type="Proteomes" id="UP000008220">
    <property type="component" value="Chromosome"/>
</dbReference>
<dbReference type="GO" id="GO:1990904">
    <property type="term" value="C:ribonucleoprotein complex"/>
    <property type="evidence" value="ECO:0007669"/>
    <property type="project" value="UniProtKB-KW"/>
</dbReference>
<dbReference type="GO" id="GO:0005840">
    <property type="term" value="C:ribosome"/>
    <property type="evidence" value="ECO:0007669"/>
    <property type="project" value="UniProtKB-KW"/>
</dbReference>
<dbReference type="GO" id="GO:0046872">
    <property type="term" value="F:metal ion binding"/>
    <property type="evidence" value="ECO:0007669"/>
    <property type="project" value="UniProtKB-KW"/>
</dbReference>
<dbReference type="GO" id="GO:0019843">
    <property type="term" value="F:rRNA binding"/>
    <property type="evidence" value="ECO:0007669"/>
    <property type="project" value="UniProtKB-KW"/>
</dbReference>
<dbReference type="GO" id="GO:0003735">
    <property type="term" value="F:structural constituent of ribosome"/>
    <property type="evidence" value="ECO:0007669"/>
    <property type="project" value="InterPro"/>
</dbReference>
<dbReference type="GO" id="GO:0006412">
    <property type="term" value="P:translation"/>
    <property type="evidence" value="ECO:0007669"/>
    <property type="project" value="UniProtKB-UniRule"/>
</dbReference>
<dbReference type="Gene3D" id="4.10.830.30">
    <property type="entry name" value="Ribosomal protein L31"/>
    <property type="match status" value="1"/>
</dbReference>
<dbReference type="HAMAP" id="MF_00501">
    <property type="entry name" value="Ribosomal_bL31_1"/>
    <property type="match status" value="1"/>
</dbReference>
<dbReference type="InterPro" id="IPR034704">
    <property type="entry name" value="Ribosomal_bL28/bL31-like_sf"/>
</dbReference>
<dbReference type="InterPro" id="IPR002150">
    <property type="entry name" value="Ribosomal_bL31"/>
</dbReference>
<dbReference type="InterPro" id="IPR027491">
    <property type="entry name" value="Ribosomal_bL31_A"/>
</dbReference>
<dbReference type="InterPro" id="IPR042105">
    <property type="entry name" value="Ribosomal_bL31_sf"/>
</dbReference>
<dbReference type="NCBIfam" id="TIGR00105">
    <property type="entry name" value="L31"/>
    <property type="match status" value="1"/>
</dbReference>
<dbReference type="NCBIfam" id="NF000612">
    <property type="entry name" value="PRK00019.1"/>
    <property type="match status" value="1"/>
</dbReference>
<dbReference type="NCBIfam" id="NF001809">
    <property type="entry name" value="PRK00528.1"/>
    <property type="match status" value="1"/>
</dbReference>
<dbReference type="PANTHER" id="PTHR33280">
    <property type="entry name" value="50S RIBOSOMAL PROTEIN L31, CHLOROPLASTIC"/>
    <property type="match status" value="1"/>
</dbReference>
<dbReference type="PANTHER" id="PTHR33280:SF1">
    <property type="entry name" value="LARGE RIBOSOMAL SUBUNIT PROTEIN BL31C"/>
    <property type="match status" value="1"/>
</dbReference>
<dbReference type="Pfam" id="PF01197">
    <property type="entry name" value="Ribosomal_L31"/>
    <property type="match status" value="1"/>
</dbReference>
<dbReference type="PRINTS" id="PR01249">
    <property type="entry name" value="RIBOSOMALL31"/>
</dbReference>
<dbReference type="SUPFAM" id="SSF143800">
    <property type="entry name" value="L28p-like"/>
    <property type="match status" value="1"/>
</dbReference>
<dbReference type="PROSITE" id="PS01143">
    <property type="entry name" value="RIBOSOMAL_L31"/>
    <property type="match status" value="1"/>
</dbReference>
<protein>
    <recommendedName>
        <fullName evidence="1">Large ribosomal subunit protein bL31</fullName>
    </recommendedName>
    <alternativeName>
        <fullName evidence="2">50S ribosomal protein L31</fullName>
    </alternativeName>
</protein>
<proteinExistence type="inferred from homology"/>
<evidence type="ECO:0000255" key="1">
    <source>
        <dbReference type="HAMAP-Rule" id="MF_00501"/>
    </source>
</evidence>
<evidence type="ECO:0000305" key="2"/>
<sequence>MKQGLHPEYHHDAVVKCACGNTFTTGSTNAELKVDVCSKCHPFYTGKQKILDTGGRIEKFMKKYNLNQK</sequence>
<comment type="function">
    <text evidence="1">Binds the 23S rRNA.</text>
</comment>
<comment type="cofactor">
    <cofactor evidence="1">
        <name>Zn(2+)</name>
        <dbReference type="ChEBI" id="CHEBI:29105"/>
    </cofactor>
    <text evidence="1">Binds 1 zinc ion per subunit.</text>
</comment>
<comment type="subunit">
    <text evidence="1">Part of the 50S ribosomal subunit.</text>
</comment>
<comment type="similarity">
    <text evidence="1">Belongs to the bacterial ribosomal protein bL31 family. Type A subfamily.</text>
</comment>
<organism>
    <name type="scientific">Clostridium novyi (strain NT)</name>
    <dbReference type="NCBI Taxonomy" id="386415"/>
    <lineage>
        <taxon>Bacteria</taxon>
        <taxon>Bacillati</taxon>
        <taxon>Bacillota</taxon>
        <taxon>Clostridia</taxon>
        <taxon>Eubacteriales</taxon>
        <taxon>Clostridiaceae</taxon>
        <taxon>Clostridium</taxon>
    </lineage>
</organism>
<gene>
    <name evidence="1" type="primary">rpmE</name>
    <name type="ordered locus">NT01CX_0552</name>
</gene>
<keyword id="KW-0479">Metal-binding</keyword>
<keyword id="KW-1185">Reference proteome</keyword>
<keyword id="KW-0687">Ribonucleoprotein</keyword>
<keyword id="KW-0689">Ribosomal protein</keyword>
<keyword id="KW-0694">RNA-binding</keyword>
<keyword id="KW-0699">rRNA-binding</keyword>
<keyword id="KW-0862">Zinc</keyword>